<comment type="function">
    <text evidence="1">Transfers the 4'-phosphopantetheine moiety from coenzyme A to a Ser of acyl-carrier-protein.</text>
</comment>
<comment type="catalytic activity">
    <reaction evidence="1">
        <text>apo-[ACP] + CoA = holo-[ACP] + adenosine 3',5'-bisphosphate + H(+)</text>
        <dbReference type="Rhea" id="RHEA:12068"/>
        <dbReference type="Rhea" id="RHEA-COMP:9685"/>
        <dbReference type="Rhea" id="RHEA-COMP:9690"/>
        <dbReference type="ChEBI" id="CHEBI:15378"/>
        <dbReference type="ChEBI" id="CHEBI:29999"/>
        <dbReference type="ChEBI" id="CHEBI:57287"/>
        <dbReference type="ChEBI" id="CHEBI:58343"/>
        <dbReference type="ChEBI" id="CHEBI:64479"/>
        <dbReference type="EC" id="2.7.8.7"/>
    </reaction>
</comment>
<comment type="cofactor">
    <cofactor evidence="1">
        <name>Mg(2+)</name>
        <dbReference type="ChEBI" id="CHEBI:18420"/>
    </cofactor>
</comment>
<comment type="subcellular location">
    <subcellularLocation>
        <location evidence="1">Cytoplasm</location>
    </subcellularLocation>
</comment>
<comment type="similarity">
    <text evidence="1">Belongs to the P-Pant transferase superfamily. AcpS family.</text>
</comment>
<reference key="1">
    <citation type="journal article" date="2008" name="Infect. Immun.">
        <title>Genomic comparison of virulent Rickettsia rickettsii Sheila Smith and avirulent Rickettsia rickettsii Iowa.</title>
        <authorList>
            <person name="Ellison D.W."/>
            <person name="Clark T.R."/>
            <person name="Sturdevant D.E."/>
            <person name="Virtaneva K."/>
            <person name="Porcella S.F."/>
            <person name="Hackstadt T."/>
        </authorList>
    </citation>
    <scope>NUCLEOTIDE SEQUENCE [LARGE SCALE GENOMIC DNA]</scope>
    <source>
        <strain>Iowa</strain>
    </source>
</reference>
<accession>B0BYC4</accession>
<organism>
    <name type="scientific">Rickettsia rickettsii (strain Iowa)</name>
    <dbReference type="NCBI Taxonomy" id="452659"/>
    <lineage>
        <taxon>Bacteria</taxon>
        <taxon>Pseudomonadati</taxon>
        <taxon>Pseudomonadota</taxon>
        <taxon>Alphaproteobacteria</taxon>
        <taxon>Rickettsiales</taxon>
        <taxon>Rickettsiaceae</taxon>
        <taxon>Rickettsieae</taxon>
        <taxon>Rickettsia</taxon>
        <taxon>spotted fever group</taxon>
    </lineage>
</organism>
<keyword id="KW-0963">Cytoplasm</keyword>
<keyword id="KW-0275">Fatty acid biosynthesis</keyword>
<keyword id="KW-0276">Fatty acid metabolism</keyword>
<keyword id="KW-0444">Lipid biosynthesis</keyword>
<keyword id="KW-0443">Lipid metabolism</keyword>
<keyword id="KW-0460">Magnesium</keyword>
<keyword id="KW-0479">Metal-binding</keyword>
<keyword id="KW-0808">Transferase</keyword>
<proteinExistence type="inferred from homology"/>
<protein>
    <recommendedName>
        <fullName evidence="1">Holo-[acyl-carrier-protein] synthase</fullName>
        <shortName evidence="1">Holo-ACP synthase</shortName>
        <ecNumber evidence="1">2.7.8.7</ecNumber>
    </recommendedName>
    <alternativeName>
        <fullName evidence="1">4'-phosphopantetheinyl transferase AcpS</fullName>
    </alternativeName>
</protein>
<name>ACPS_RICRO</name>
<feature type="chain" id="PRO_1000075653" description="Holo-[acyl-carrier-protein] synthase">
    <location>
        <begin position="1"/>
        <end position="131"/>
    </location>
</feature>
<feature type="binding site" evidence="1">
    <location>
        <position position="8"/>
    </location>
    <ligand>
        <name>Mg(2+)</name>
        <dbReference type="ChEBI" id="CHEBI:18420"/>
    </ligand>
</feature>
<feature type="binding site" evidence="1">
    <location>
        <position position="59"/>
    </location>
    <ligand>
        <name>Mg(2+)</name>
        <dbReference type="ChEBI" id="CHEBI:18420"/>
    </ligand>
</feature>
<dbReference type="EC" id="2.7.8.7" evidence="1"/>
<dbReference type="EMBL" id="CP000766">
    <property type="protein sequence ID" value="ABY72850.1"/>
    <property type="molecule type" value="Genomic_DNA"/>
</dbReference>
<dbReference type="RefSeq" id="WP_012262491.1">
    <property type="nucleotide sequence ID" value="NC_010263.3"/>
</dbReference>
<dbReference type="SMR" id="B0BYC4"/>
<dbReference type="KEGG" id="rrj:RrIowa_1048"/>
<dbReference type="eggNOG" id="COG0736">
    <property type="taxonomic scope" value="Bacteria"/>
</dbReference>
<dbReference type="HOGENOM" id="CLU_089696_1_2_5"/>
<dbReference type="Proteomes" id="UP000000796">
    <property type="component" value="Chromosome"/>
</dbReference>
<dbReference type="GO" id="GO:0005737">
    <property type="term" value="C:cytoplasm"/>
    <property type="evidence" value="ECO:0007669"/>
    <property type="project" value="UniProtKB-SubCell"/>
</dbReference>
<dbReference type="GO" id="GO:0008897">
    <property type="term" value="F:holo-[acyl-carrier-protein] synthase activity"/>
    <property type="evidence" value="ECO:0007669"/>
    <property type="project" value="UniProtKB-UniRule"/>
</dbReference>
<dbReference type="GO" id="GO:0000287">
    <property type="term" value="F:magnesium ion binding"/>
    <property type="evidence" value="ECO:0007669"/>
    <property type="project" value="UniProtKB-UniRule"/>
</dbReference>
<dbReference type="GO" id="GO:0006633">
    <property type="term" value="P:fatty acid biosynthetic process"/>
    <property type="evidence" value="ECO:0007669"/>
    <property type="project" value="UniProtKB-UniRule"/>
</dbReference>
<dbReference type="Gene3D" id="3.90.470.20">
    <property type="entry name" value="4'-phosphopantetheinyl transferase domain"/>
    <property type="match status" value="1"/>
</dbReference>
<dbReference type="HAMAP" id="MF_00101">
    <property type="entry name" value="AcpS"/>
    <property type="match status" value="1"/>
</dbReference>
<dbReference type="InterPro" id="IPR008278">
    <property type="entry name" value="4-PPantetheinyl_Trfase_dom"/>
</dbReference>
<dbReference type="InterPro" id="IPR037143">
    <property type="entry name" value="4-PPantetheinyl_Trfase_dom_sf"/>
</dbReference>
<dbReference type="InterPro" id="IPR002582">
    <property type="entry name" value="ACPS"/>
</dbReference>
<dbReference type="InterPro" id="IPR004568">
    <property type="entry name" value="Ppantetheine-prot_Trfase_dom"/>
</dbReference>
<dbReference type="NCBIfam" id="TIGR00516">
    <property type="entry name" value="acpS"/>
    <property type="match status" value="1"/>
</dbReference>
<dbReference type="NCBIfam" id="TIGR00556">
    <property type="entry name" value="pantethn_trn"/>
    <property type="match status" value="1"/>
</dbReference>
<dbReference type="Pfam" id="PF01648">
    <property type="entry name" value="ACPS"/>
    <property type="match status" value="1"/>
</dbReference>
<dbReference type="SUPFAM" id="SSF56214">
    <property type="entry name" value="4'-phosphopantetheinyl transferase"/>
    <property type="match status" value="1"/>
</dbReference>
<gene>
    <name evidence="1" type="primary">acpS</name>
    <name type="ordered locus">RrIowa_1048</name>
</gene>
<sequence>MLIGVGTDIVQIPRIEKILHLYPELFAKKILTSKELKQFALLGKINHAAFLAKRFAAKEAVSKAFGVGIGQGINFKDITILNNDLGKPIVEVSSNYTNKLSPFNIHLSLADDYPVCVAFAVIESSYNVIRG</sequence>
<evidence type="ECO:0000255" key="1">
    <source>
        <dbReference type="HAMAP-Rule" id="MF_00101"/>
    </source>
</evidence>